<evidence type="ECO:0000255" key="1">
    <source>
        <dbReference type="HAMAP-Rule" id="MF_01174"/>
    </source>
</evidence>
<reference key="1">
    <citation type="journal article" date="2006" name="Proc. Natl. Acad. Sci. U.S.A.">
        <title>Identification of genes subject to positive selection in uropathogenic strains of Escherichia coli: a comparative genomics approach.</title>
        <authorList>
            <person name="Chen S.L."/>
            <person name="Hung C.-S."/>
            <person name="Xu J."/>
            <person name="Reigstad C.S."/>
            <person name="Magrini V."/>
            <person name="Sabo A."/>
            <person name="Blasiar D."/>
            <person name="Bieri T."/>
            <person name="Meyer R.R."/>
            <person name="Ozersky P."/>
            <person name="Armstrong J.R."/>
            <person name="Fulton R.S."/>
            <person name="Latreille J.P."/>
            <person name="Spieth J."/>
            <person name="Hooton T.M."/>
            <person name="Mardis E.R."/>
            <person name="Hultgren S.J."/>
            <person name="Gordon J.I."/>
        </authorList>
    </citation>
    <scope>NUCLEOTIDE SEQUENCE [LARGE SCALE GENOMIC DNA]</scope>
    <source>
        <strain>UTI89 / UPEC</strain>
    </source>
</reference>
<feature type="chain" id="PRO_0000262399" description="N-succinylglutamate 5-semialdehyde dehydrogenase">
    <location>
        <begin position="1"/>
        <end position="492"/>
    </location>
</feature>
<feature type="active site" evidence="1">
    <location>
        <position position="243"/>
    </location>
</feature>
<feature type="active site" evidence="1">
    <location>
        <position position="277"/>
    </location>
</feature>
<feature type="binding site" evidence="1">
    <location>
        <begin position="220"/>
        <end position="225"/>
    </location>
    <ligand>
        <name>NAD(+)</name>
        <dbReference type="ChEBI" id="CHEBI:57540"/>
    </ligand>
</feature>
<gene>
    <name evidence="1" type="primary">astD</name>
    <name type="ordered locus">UTI89_C1941</name>
</gene>
<name>ASTD_ECOUT</name>
<keyword id="KW-0056">Arginine metabolism</keyword>
<keyword id="KW-0520">NAD</keyword>
<keyword id="KW-0560">Oxidoreductase</keyword>
<proteinExistence type="inferred from homology"/>
<organism>
    <name type="scientific">Escherichia coli (strain UTI89 / UPEC)</name>
    <dbReference type="NCBI Taxonomy" id="364106"/>
    <lineage>
        <taxon>Bacteria</taxon>
        <taxon>Pseudomonadati</taxon>
        <taxon>Pseudomonadota</taxon>
        <taxon>Gammaproteobacteria</taxon>
        <taxon>Enterobacterales</taxon>
        <taxon>Enterobacteriaceae</taxon>
        <taxon>Escherichia</taxon>
    </lineage>
</organism>
<sequence>MTLWINGDWVTGQGALRVKRNPVSGEVLWQGNDADAAQVGQACRAARAAFPRWARLSFGDRQVRVERFAGLLESNKAELTAIIARETGKPRWEAATEVTAMINKIAISIKAYHVRTGEQRSEMPDGAASLRHRPHGVLAVFGPYNFPGHLPNGHIVPALLAGNTIIFKPSELTPWSGDAVMRLWQQAGLPPGVLNLVQGGRETGQALSALEDLDGLLFTGSANTGYQLHRQLSGQPEKILALEMGGNNPLIIDEVADIDAAVHLTIQSAFVTAGQRCTCARRLFLKSGTQGDAFLARLVAVSQRLTPGTWDDEPQPFIGGLISEQAAQQVVTAWQELEAMGGRTLLAPRLLQAGTSLLTPGIIEMTGVTGLPDEEVFGPLLRVWRYDNFDEAIRMANNTRFGLSCGLVSPEREKFDQLLLEARAGIVNWNKPLTGAASTAPFGGIGASGNHRPSAWYAADYCAWPMASLESDSLTLPATLNPGLDFSDEVVR</sequence>
<dbReference type="EC" id="1.2.1.71" evidence="1"/>
<dbReference type="EMBL" id="CP000243">
    <property type="protein sequence ID" value="ABE07417.1"/>
    <property type="molecule type" value="Genomic_DNA"/>
</dbReference>
<dbReference type="RefSeq" id="WP_000177323.1">
    <property type="nucleotide sequence ID" value="NZ_CP064825.1"/>
</dbReference>
<dbReference type="SMR" id="Q1RB47"/>
<dbReference type="KEGG" id="eci:UTI89_C1941"/>
<dbReference type="HOGENOM" id="CLU_005391_1_0_6"/>
<dbReference type="UniPathway" id="UPA00185">
    <property type="reaction ID" value="UER00282"/>
</dbReference>
<dbReference type="Proteomes" id="UP000001952">
    <property type="component" value="Chromosome"/>
</dbReference>
<dbReference type="GO" id="GO:0004030">
    <property type="term" value="F:aldehyde dehydrogenase [NAD(P)+] activity"/>
    <property type="evidence" value="ECO:0007669"/>
    <property type="project" value="UniProtKB-ARBA"/>
</dbReference>
<dbReference type="GO" id="GO:0043824">
    <property type="term" value="F:succinylglutamate-semialdehyde dehydrogenase activity"/>
    <property type="evidence" value="ECO:0007669"/>
    <property type="project" value="UniProtKB-EC"/>
</dbReference>
<dbReference type="GO" id="GO:0019544">
    <property type="term" value="P:arginine catabolic process to glutamate"/>
    <property type="evidence" value="ECO:0007669"/>
    <property type="project" value="UniProtKB-UniRule"/>
</dbReference>
<dbReference type="GO" id="GO:0019545">
    <property type="term" value="P:arginine catabolic process to succinate"/>
    <property type="evidence" value="ECO:0007669"/>
    <property type="project" value="UniProtKB-UniRule"/>
</dbReference>
<dbReference type="CDD" id="cd07095">
    <property type="entry name" value="ALDH_SGSD_AstD"/>
    <property type="match status" value="1"/>
</dbReference>
<dbReference type="FunFam" id="3.40.309.10:FF:000013">
    <property type="entry name" value="N-succinylglutamate 5-semialdehyde dehydrogenase"/>
    <property type="match status" value="1"/>
</dbReference>
<dbReference type="FunFam" id="3.40.605.10:FF:000010">
    <property type="entry name" value="N-succinylglutamate 5-semialdehyde dehydrogenase"/>
    <property type="match status" value="1"/>
</dbReference>
<dbReference type="Gene3D" id="3.40.605.10">
    <property type="entry name" value="Aldehyde Dehydrogenase, Chain A, domain 1"/>
    <property type="match status" value="1"/>
</dbReference>
<dbReference type="Gene3D" id="3.40.309.10">
    <property type="entry name" value="Aldehyde Dehydrogenase, Chain A, domain 2"/>
    <property type="match status" value="1"/>
</dbReference>
<dbReference type="HAMAP" id="MF_01174">
    <property type="entry name" value="Aldedh_AstD"/>
    <property type="match status" value="1"/>
</dbReference>
<dbReference type="InterPro" id="IPR016161">
    <property type="entry name" value="Ald_DH/histidinol_DH"/>
</dbReference>
<dbReference type="InterPro" id="IPR016163">
    <property type="entry name" value="Ald_DH_C"/>
</dbReference>
<dbReference type="InterPro" id="IPR016160">
    <property type="entry name" value="Ald_DH_CS_CYS"/>
</dbReference>
<dbReference type="InterPro" id="IPR029510">
    <property type="entry name" value="Ald_DH_CS_GLU"/>
</dbReference>
<dbReference type="InterPro" id="IPR016162">
    <property type="entry name" value="Ald_DH_N"/>
</dbReference>
<dbReference type="InterPro" id="IPR015590">
    <property type="entry name" value="Aldehyde_DH_dom"/>
</dbReference>
<dbReference type="InterPro" id="IPR017649">
    <property type="entry name" value="SuccinylGlu_semiald_DH_AstD"/>
</dbReference>
<dbReference type="NCBIfam" id="TIGR03240">
    <property type="entry name" value="arg_catab_astD"/>
    <property type="match status" value="1"/>
</dbReference>
<dbReference type="NCBIfam" id="NF006992">
    <property type="entry name" value="PRK09457.1"/>
    <property type="match status" value="1"/>
</dbReference>
<dbReference type="PANTHER" id="PTHR11699">
    <property type="entry name" value="ALDEHYDE DEHYDROGENASE-RELATED"/>
    <property type="match status" value="1"/>
</dbReference>
<dbReference type="Pfam" id="PF00171">
    <property type="entry name" value="Aldedh"/>
    <property type="match status" value="1"/>
</dbReference>
<dbReference type="SUPFAM" id="SSF53720">
    <property type="entry name" value="ALDH-like"/>
    <property type="match status" value="1"/>
</dbReference>
<dbReference type="PROSITE" id="PS00070">
    <property type="entry name" value="ALDEHYDE_DEHYDR_CYS"/>
    <property type="match status" value="1"/>
</dbReference>
<dbReference type="PROSITE" id="PS00687">
    <property type="entry name" value="ALDEHYDE_DEHYDR_GLU"/>
    <property type="match status" value="1"/>
</dbReference>
<comment type="function">
    <text evidence="1">Catalyzes the NAD-dependent reduction of succinylglutamate semialdehyde into succinylglutamate.</text>
</comment>
<comment type="catalytic activity">
    <reaction evidence="1">
        <text>N-succinyl-L-glutamate 5-semialdehyde + NAD(+) + H2O = N-succinyl-L-glutamate + NADH + 2 H(+)</text>
        <dbReference type="Rhea" id="RHEA:10812"/>
        <dbReference type="ChEBI" id="CHEBI:15377"/>
        <dbReference type="ChEBI" id="CHEBI:15378"/>
        <dbReference type="ChEBI" id="CHEBI:57540"/>
        <dbReference type="ChEBI" id="CHEBI:57945"/>
        <dbReference type="ChEBI" id="CHEBI:58520"/>
        <dbReference type="ChEBI" id="CHEBI:58763"/>
        <dbReference type="EC" id="1.2.1.71"/>
    </reaction>
</comment>
<comment type="pathway">
    <text evidence="1">Amino-acid degradation; L-arginine degradation via AST pathway; L-glutamate and succinate from L-arginine: step 4/5.</text>
</comment>
<comment type="similarity">
    <text evidence="1">Belongs to the aldehyde dehydrogenase family. AstD subfamily.</text>
</comment>
<accession>Q1RB47</accession>
<protein>
    <recommendedName>
        <fullName evidence="1">N-succinylglutamate 5-semialdehyde dehydrogenase</fullName>
        <ecNumber evidence="1">1.2.1.71</ecNumber>
    </recommendedName>
    <alternativeName>
        <fullName evidence="1">Succinylglutamic semialdehyde dehydrogenase</fullName>
        <shortName evidence="1">SGSD</shortName>
    </alternativeName>
</protein>